<proteinExistence type="evidence at transcript level"/>
<comment type="function">
    <text evidence="1">Has no ubiquitin ligase activity on its own. The UBE2V2/UBE2N heterodimer catalyzes the synthesis of non-canonical poly-ubiquitin chains that are linked through 'Lys-63'. This type of poly-ubiquitination does not lead to protein degradation by the proteasome. Mediates transcriptional activation of target genes. Plays a role in the control of progress through the cell cycle and differentiation. Plays a role in the error-free DNA repair pathway and contributes to the survival of cells after DNA damage (By similarity).</text>
</comment>
<comment type="subunit">
    <text evidence="1">Heterodimer with UBE2N. Binds CHFR (By similarity).</text>
</comment>
<comment type="similarity">
    <text evidence="3">Belongs to the ubiquitin-conjugating enzyme family.</text>
</comment>
<keyword id="KW-0007">Acetylation</keyword>
<keyword id="KW-1185">Reference proteome</keyword>
<keyword id="KW-0833">Ubl conjugation pathway</keyword>
<protein>
    <recommendedName>
        <fullName>Ubiquitin-conjugating enzyme E2 variant 2</fullName>
    </recommendedName>
</protein>
<accession>Q5R6C9</accession>
<dbReference type="EMBL" id="CR860562">
    <property type="protein sequence ID" value="CAH92687.1"/>
    <property type="molecule type" value="mRNA"/>
</dbReference>
<dbReference type="RefSeq" id="NP_001126575.1">
    <property type="nucleotide sequence ID" value="NM_001133103.1"/>
</dbReference>
<dbReference type="SMR" id="Q5R6C9"/>
<dbReference type="FunCoup" id="Q5R6C9">
    <property type="interactions" value="3601"/>
</dbReference>
<dbReference type="STRING" id="9601.ENSPPYP00000020831"/>
<dbReference type="Ensembl" id="ENSPPYT00000021664.3">
    <property type="protein sequence ID" value="ENSPPYP00000020831.2"/>
    <property type="gene ID" value="ENSPPYG00000018575.3"/>
</dbReference>
<dbReference type="GeneID" id="100173566"/>
<dbReference type="KEGG" id="pon:100173566"/>
<dbReference type="CTD" id="7336"/>
<dbReference type="eggNOG" id="KOG0896">
    <property type="taxonomic scope" value="Eukaryota"/>
</dbReference>
<dbReference type="GeneTree" id="ENSGT00740000115534"/>
<dbReference type="HOGENOM" id="CLU_063065_3_0_1"/>
<dbReference type="InParanoid" id="Q5R6C9"/>
<dbReference type="OrthoDB" id="6508832at2759"/>
<dbReference type="TreeFam" id="TF316971"/>
<dbReference type="Proteomes" id="UP000001595">
    <property type="component" value="Chromosome 8"/>
</dbReference>
<dbReference type="CDD" id="cd23807">
    <property type="entry name" value="UEV_UBE2V"/>
    <property type="match status" value="1"/>
</dbReference>
<dbReference type="FunFam" id="3.10.110.10:FF:000012">
    <property type="entry name" value="Ubiquitin-conjugating enzyme E2 variant 2"/>
    <property type="match status" value="1"/>
</dbReference>
<dbReference type="Gene3D" id="3.10.110.10">
    <property type="entry name" value="Ubiquitin Conjugating Enzyme"/>
    <property type="match status" value="1"/>
</dbReference>
<dbReference type="InterPro" id="IPR000608">
    <property type="entry name" value="UBQ-conjugat_E2_core"/>
</dbReference>
<dbReference type="InterPro" id="IPR016135">
    <property type="entry name" value="UBQ-conjugating_enzyme/RWD"/>
</dbReference>
<dbReference type="PANTHER" id="PTHR24068">
    <property type="entry name" value="UBIQUITIN-CONJUGATING ENZYME E2"/>
    <property type="match status" value="1"/>
</dbReference>
<dbReference type="Pfam" id="PF00179">
    <property type="entry name" value="UQ_con"/>
    <property type="match status" value="1"/>
</dbReference>
<dbReference type="SMART" id="SM00212">
    <property type="entry name" value="UBCc"/>
    <property type="match status" value="1"/>
</dbReference>
<dbReference type="SUPFAM" id="SSF54495">
    <property type="entry name" value="UBC-like"/>
    <property type="match status" value="1"/>
</dbReference>
<dbReference type="PROSITE" id="PS50127">
    <property type="entry name" value="UBC_2"/>
    <property type="match status" value="1"/>
</dbReference>
<gene>
    <name type="primary">UBE2V2</name>
</gene>
<sequence>MAVSTGVKVPRNFRLLEELEEGQKGVGDGTVSWGLEDDEDMTLTRWTGMIIGPPRTNYENRIYSLKVECGPKYPEAPPSVRFVTKINMNGINNSSGMVDARSIPVLAKWQNSYSIKVVLQELRRLMMSKENMKLPQPPEGQTYNN</sequence>
<reference key="1">
    <citation type="submission" date="2004-11" db="EMBL/GenBank/DDBJ databases">
        <authorList>
            <consortium name="The German cDNA consortium"/>
        </authorList>
    </citation>
    <scope>NUCLEOTIDE SEQUENCE [LARGE SCALE MRNA]</scope>
    <source>
        <tissue>Brain cortex</tissue>
    </source>
</reference>
<evidence type="ECO:0000250" key="1"/>
<evidence type="ECO:0000250" key="2">
    <source>
        <dbReference type="UniProtKB" id="Q15819"/>
    </source>
</evidence>
<evidence type="ECO:0000255" key="3">
    <source>
        <dbReference type="PROSITE-ProRule" id="PRU00388"/>
    </source>
</evidence>
<organism>
    <name type="scientific">Pongo abelii</name>
    <name type="common">Sumatran orangutan</name>
    <name type="synonym">Pongo pygmaeus abelii</name>
    <dbReference type="NCBI Taxonomy" id="9601"/>
    <lineage>
        <taxon>Eukaryota</taxon>
        <taxon>Metazoa</taxon>
        <taxon>Chordata</taxon>
        <taxon>Craniata</taxon>
        <taxon>Vertebrata</taxon>
        <taxon>Euteleostomi</taxon>
        <taxon>Mammalia</taxon>
        <taxon>Eutheria</taxon>
        <taxon>Euarchontoglires</taxon>
        <taxon>Primates</taxon>
        <taxon>Haplorrhini</taxon>
        <taxon>Catarrhini</taxon>
        <taxon>Hominidae</taxon>
        <taxon>Pongo</taxon>
    </lineage>
</organism>
<feature type="initiator methionine" description="Removed" evidence="2">
    <location>
        <position position="1"/>
    </location>
</feature>
<feature type="chain" id="PRO_0000292585" description="Ubiquitin-conjugating enzyme E2 variant 2">
    <location>
        <begin position="2"/>
        <end position="145"/>
    </location>
</feature>
<feature type="domain" description="UBC core" evidence="3">
    <location>
        <begin position="10"/>
        <end position="145"/>
    </location>
</feature>
<feature type="modified residue" description="N-acetylalanine" evidence="2">
    <location>
        <position position="2"/>
    </location>
</feature>
<name>UB2V2_PONAB</name>